<sequence>MSVSSAPPSATPGFASEVRTTGLLALPLVLGHVSTGLIGFVDNVIAGHHGTATLAAVTIGTSLLWLPMLVPIGTLISLTASVSQLLGAGREREIGPLFRQALWLSLGLSALMFVFLSVVPPLLPTFGIAPDIVPGATAFLHAVRWGVPALTFYFCMRYLSEGMHWTLPTMLLGFGGLLVLAPVGYALTYGKFGFAEHGAEGLGMASAITMWVQASVFALYLWRARRFAHLQLFAHLEGPRWRAIGELLRTGLPIGITVLMEGGLFIVTALLIGRLGSTEAAAHQIAINVAQLCFMIPMGVAEATTVRVGHAVGRGDPQAMRRAAWAGYAIVLGTQALSASALLLGHDAIVGVYTDDVAVAALASVLLLFAATFQFPDGIQVLSAGALRGLKDTRVPMFLAMFSYWGVGMPIGAGLGLGLGWGPKGMWVGLILGLTVASILMGLRFRQTSRRLTATVTP</sequence>
<proteinExistence type="inferred from homology"/>
<organism>
    <name type="scientific">Xanthomonas axonopodis pv. citri (strain 306)</name>
    <dbReference type="NCBI Taxonomy" id="190486"/>
    <lineage>
        <taxon>Bacteria</taxon>
        <taxon>Pseudomonadati</taxon>
        <taxon>Pseudomonadota</taxon>
        <taxon>Gammaproteobacteria</taxon>
        <taxon>Lysobacterales</taxon>
        <taxon>Lysobacteraceae</taxon>
        <taxon>Xanthomonas</taxon>
    </lineage>
</organism>
<evidence type="ECO:0000250" key="1"/>
<evidence type="ECO:0000255" key="2"/>
<evidence type="ECO:0000305" key="3"/>
<gene>
    <name type="primary">norM</name>
    <name type="ordered locus">XAC3814</name>
</gene>
<keyword id="KW-0050">Antiport</keyword>
<keyword id="KW-0997">Cell inner membrane</keyword>
<keyword id="KW-1003">Cell membrane</keyword>
<keyword id="KW-0406">Ion transport</keyword>
<keyword id="KW-0472">Membrane</keyword>
<keyword id="KW-0812">Transmembrane</keyword>
<keyword id="KW-1133">Transmembrane helix</keyword>
<keyword id="KW-0813">Transport</keyword>
<name>NORM_XANAC</name>
<comment type="function">
    <text evidence="1">Multidrug efflux pump.</text>
</comment>
<comment type="subcellular location">
    <subcellularLocation>
        <location evidence="1">Cell inner membrane</location>
        <topology evidence="1">Multi-pass membrane protein</topology>
    </subcellularLocation>
</comment>
<comment type="similarity">
    <text evidence="3">Belongs to the multi antimicrobial extrusion (MATE) (TC 2.A.66.1) family.</text>
</comment>
<feature type="chain" id="PRO_0000164249" description="Probable multidrug resistance protein NorM">
    <location>
        <begin position="1"/>
        <end position="458"/>
    </location>
</feature>
<feature type="transmembrane region" description="Helical" evidence="2">
    <location>
        <begin position="21"/>
        <end position="43"/>
    </location>
</feature>
<feature type="transmembrane region" description="Helical" evidence="2">
    <location>
        <begin position="58"/>
        <end position="80"/>
    </location>
</feature>
<feature type="transmembrane region" description="Helical" evidence="2">
    <location>
        <begin position="101"/>
        <end position="123"/>
    </location>
</feature>
<feature type="transmembrane region" description="Helical" evidence="2">
    <location>
        <begin position="138"/>
        <end position="160"/>
    </location>
</feature>
<feature type="transmembrane region" description="Helical" evidence="2">
    <location>
        <begin position="167"/>
        <end position="189"/>
    </location>
</feature>
<feature type="transmembrane region" description="Helical" evidence="2">
    <location>
        <begin position="199"/>
        <end position="221"/>
    </location>
</feature>
<feature type="transmembrane region" description="Helical" evidence="2">
    <location>
        <begin position="251"/>
        <end position="273"/>
    </location>
</feature>
<feature type="transmembrane region" description="Helical" evidence="2">
    <location>
        <begin position="288"/>
        <end position="310"/>
    </location>
</feature>
<feature type="transmembrane region" description="Helical" evidence="2">
    <location>
        <begin position="323"/>
        <end position="345"/>
    </location>
</feature>
<feature type="transmembrane region" description="Helical" evidence="2">
    <location>
        <begin position="360"/>
        <end position="382"/>
    </location>
</feature>
<feature type="transmembrane region" description="Helical" evidence="2">
    <location>
        <begin position="395"/>
        <end position="417"/>
    </location>
</feature>
<feature type="transmembrane region" description="Helical" evidence="2">
    <location>
        <begin position="427"/>
        <end position="445"/>
    </location>
</feature>
<accession>Q8PG07</accession>
<reference key="1">
    <citation type="journal article" date="2002" name="Nature">
        <title>Comparison of the genomes of two Xanthomonas pathogens with differing host specificities.</title>
        <authorList>
            <person name="da Silva A.C.R."/>
            <person name="Ferro J.A."/>
            <person name="Reinach F.C."/>
            <person name="Farah C.S."/>
            <person name="Furlan L.R."/>
            <person name="Quaggio R.B."/>
            <person name="Monteiro-Vitorello C.B."/>
            <person name="Van Sluys M.A."/>
            <person name="Almeida N.F. Jr."/>
            <person name="Alves L.M.C."/>
            <person name="do Amaral A.M."/>
            <person name="Bertolini M.C."/>
            <person name="Camargo L.E.A."/>
            <person name="Camarotte G."/>
            <person name="Cannavan F."/>
            <person name="Cardozo J."/>
            <person name="Chambergo F."/>
            <person name="Ciapina L.P."/>
            <person name="Cicarelli R.M.B."/>
            <person name="Coutinho L.L."/>
            <person name="Cursino-Santos J.R."/>
            <person name="El-Dorry H."/>
            <person name="Faria J.B."/>
            <person name="Ferreira A.J.S."/>
            <person name="Ferreira R.C.C."/>
            <person name="Ferro M.I.T."/>
            <person name="Formighieri E.F."/>
            <person name="Franco M.C."/>
            <person name="Greggio C.C."/>
            <person name="Gruber A."/>
            <person name="Katsuyama A.M."/>
            <person name="Kishi L.T."/>
            <person name="Leite R.P."/>
            <person name="Lemos E.G.M."/>
            <person name="Lemos M.V.F."/>
            <person name="Locali E.C."/>
            <person name="Machado M.A."/>
            <person name="Madeira A.M.B.N."/>
            <person name="Martinez-Rossi N.M."/>
            <person name="Martins E.C."/>
            <person name="Meidanis J."/>
            <person name="Menck C.F.M."/>
            <person name="Miyaki C.Y."/>
            <person name="Moon D.H."/>
            <person name="Moreira L.M."/>
            <person name="Novo M.T.M."/>
            <person name="Okura V.K."/>
            <person name="Oliveira M.C."/>
            <person name="Oliveira V.R."/>
            <person name="Pereira H.A."/>
            <person name="Rossi A."/>
            <person name="Sena J.A.D."/>
            <person name="Silva C."/>
            <person name="de Souza R.F."/>
            <person name="Spinola L.A.F."/>
            <person name="Takita M.A."/>
            <person name="Tamura R.E."/>
            <person name="Teixeira E.C."/>
            <person name="Tezza R.I.D."/>
            <person name="Trindade dos Santos M."/>
            <person name="Truffi D."/>
            <person name="Tsai S.M."/>
            <person name="White F.F."/>
            <person name="Setubal J.C."/>
            <person name="Kitajima J.P."/>
        </authorList>
    </citation>
    <scope>NUCLEOTIDE SEQUENCE [LARGE SCALE GENOMIC DNA]</scope>
    <source>
        <strain>306</strain>
    </source>
</reference>
<dbReference type="EMBL" id="AE008923">
    <property type="protein sequence ID" value="AAM38656.1"/>
    <property type="molecule type" value="Genomic_DNA"/>
</dbReference>
<dbReference type="RefSeq" id="WP_011052541.1">
    <property type="nucleotide sequence ID" value="NC_003919.1"/>
</dbReference>
<dbReference type="SMR" id="Q8PG07"/>
<dbReference type="KEGG" id="xac:XAC3814"/>
<dbReference type="eggNOG" id="COG0534">
    <property type="taxonomic scope" value="Bacteria"/>
</dbReference>
<dbReference type="HOGENOM" id="CLU_012893_6_0_6"/>
<dbReference type="Proteomes" id="UP000000576">
    <property type="component" value="Chromosome"/>
</dbReference>
<dbReference type="GO" id="GO:0005886">
    <property type="term" value="C:plasma membrane"/>
    <property type="evidence" value="ECO:0007669"/>
    <property type="project" value="UniProtKB-SubCell"/>
</dbReference>
<dbReference type="GO" id="GO:0015297">
    <property type="term" value="F:antiporter activity"/>
    <property type="evidence" value="ECO:0007669"/>
    <property type="project" value="UniProtKB-KW"/>
</dbReference>
<dbReference type="GO" id="GO:0042910">
    <property type="term" value="F:xenobiotic transmembrane transporter activity"/>
    <property type="evidence" value="ECO:0007669"/>
    <property type="project" value="InterPro"/>
</dbReference>
<dbReference type="GO" id="GO:0006811">
    <property type="term" value="P:monoatomic ion transport"/>
    <property type="evidence" value="ECO:0007669"/>
    <property type="project" value="UniProtKB-KW"/>
</dbReference>
<dbReference type="CDD" id="cd13131">
    <property type="entry name" value="MATE_NorM_like"/>
    <property type="match status" value="1"/>
</dbReference>
<dbReference type="InterPro" id="IPR002528">
    <property type="entry name" value="MATE_fam"/>
</dbReference>
<dbReference type="InterPro" id="IPR050222">
    <property type="entry name" value="MATE_MdtK"/>
</dbReference>
<dbReference type="NCBIfam" id="TIGR00797">
    <property type="entry name" value="matE"/>
    <property type="match status" value="1"/>
</dbReference>
<dbReference type="PANTHER" id="PTHR43298:SF2">
    <property type="entry name" value="FMN_FAD EXPORTER YEEO-RELATED"/>
    <property type="match status" value="1"/>
</dbReference>
<dbReference type="PANTHER" id="PTHR43298">
    <property type="entry name" value="MULTIDRUG RESISTANCE PROTEIN NORM-RELATED"/>
    <property type="match status" value="1"/>
</dbReference>
<dbReference type="Pfam" id="PF01554">
    <property type="entry name" value="MatE"/>
    <property type="match status" value="2"/>
</dbReference>
<protein>
    <recommendedName>
        <fullName>Probable multidrug resistance protein NorM</fullName>
    </recommendedName>
    <alternativeName>
        <fullName>Multidrug-efflux transporter</fullName>
    </alternativeName>
</protein>